<proteinExistence type="inferred from homology"/>
<sequence length="153" mass="17341">MSNQLNTMDIKEILKYLPHRYPFLLIDRVLDFTRGESLHAIKNVTINEPFFQGHFPVQPVMPGVLILEAMAQATGLLAFKTMSEEPSPNVLYYFAGIDKARFKRVVGPGDQIHFHVKMIKERRGIGVFIGEAYVDGELACSAEIMCARREISK</sequence>
<gene>
    <name evidence="1" type="primary">fabZ</name>
    <name type="ordered locus">Sden_1565</name>
</gene>
<comment type="function">
    <text evidence="1">Involved in unsaturated fatty acids biosynthesis. Catalyzes the dehydration of short chain beta-hydroxyacyl-ACPs and long chain saturated and unsaturated beta-hydroxyacyl-ACPs.</text>
</comment>
<comment type="catalytic activity">
    <reaction evidence="1">
        <text>a (3R)-hydroxyacyl-[ACP] = a (2E)-enoyl-[ACP] + H2O</text>
        <dbReference type="Rhea" id="RHEA:13097"/>
        <dbReference type="Rhea" id="RHEA-COMP:9925"/>
        <dbReference type="Rhea" id="RHEA-COMP:9945"/>
        <dbReference type="ChEBI" id="CHEBI:15377"/>
        <dbReference type="ChEBI" id="CHEBI:78784"/>
        <dbReference type="ChEBI" id="CHEBI:78827"/>
        <dbReference type="EC" id="4.2.1.59"/>
    </reaction>
</comment>
<comment type="subcellular location">
    <subcellularLocation>
        <location evidence="1">Cytoplasm</location>
    </subcellularLocation>
</comment>
<comment type="similarity">
    <text evidence="1">Belongs to the thioester dehydratase family. FabZ subfamily.</text>
</comment>
<dbReference type="EC" id="4.2.1.59" evidence="1"/>
<dbReference type="EMBL" id="CP000302">
    <property type="protein sequence ID" value="ABE54850.1"/>
    <property type="molecule type" value="Genomic_DNA"/>
</dbReference>
<dbReference type="RefSeq" id="WP_011496008.1">
    <property type="nucleotide sequence ID" value="NC_007954.1"/>
</dbReference>
<dbReference type="SMR" id="Q12NX6"/>
<dbReference type="STRING" id="318161.Sden_1565"/>
<dbReference type="KEGG" id="sdn:Sden_1565"/>
<dbReference type="eggNOG" id="COG0764">
    <property type="taxonomic scope" value="Bacteria"/>
</dbReference>
<dbReference type="HOGENOM" id="CLU_078912_1_0_6"/>
<dbReference type="OrthoDB" id="9772788at2"/>
<dbReference type="Proteomes" id="UP000001982">
    <property type="component" value="Chromosome"/>
</dbReference>
<dbReference type="GO" id="GO:0005737">
    <property type="term" value="C:cytoplasm"/>
    <property type="evidence" value="ECO:0007669"/>
    <property type="project" value="UniProtKB-SubCell"/>
</dbReference>
<dbReference type="GO" id="GO:0016020">
    <property type="term" value="C:membrane"/>
    <property type="evidence" value="ECO:0007669"/>
    <property type="project" value="GOC"/>
</dbReference>
<dbReference type="GO" id="GO:0019171">
    <property type="term" value="F:(3R)-hydroxyacyl-[acyl-carrier-protein] dehydratase activity"/>
    <property type="evidence" value="ECO:0007669"/>
    <property type="project" value="UniProtKB-EC"/>
</dbReference>
<dbReference type="GO" id="GO:0006633">
    <property type="term" value="P:fatty acid biosynthetic process"/>
    <property type="evidence" value="ECO:0007669"/>
    <property type="project" value="UniProtKB-UniRule"/>
</dbReference>
<dbReference type="GO" id="GO:0009245">
    <property type="term" value="P:lipid A biosynthetic process"/>
    <property type="evidence" value="ECO:0007669"/>
    <property type="project" value="UniProtKB-UniRule"/>
</dbReference>
<dbReference type="CDD" id="cd01288">
    <property type="entry name" value="FabZ"/>
    <property type="match status" value="1"/>
</dbReference>
<dbReference type="FunFam" id="3.10.129.10:FF:000001">
    <property type="entry name" value="3-hydroxyacyl-[acyl-carrier-protein] dehydratase FabZ"/>
    <property type="match status" value="1"/>
</dbReference>
<dbReference type="Gene3D" id="3.10.129.10">
    <property type="entry name" value="Hotdog Thioesterase"/>
    <property type="match status" value="1"/>
</dbReference>
<dbReference type="HAMAP" id="MF_00406">
    <property type="entry name" value="FabZ"/>
    <property type="match status" value="1"/>
</dbReference>
<dbReference type="InterPro" id="IPR013114">
    <property type="entry name" value="FabA_FabZ"/>
</dbReference>
<dbReference type="InterPro" id="IPR010084">
    <property type="entry name" value="FabZ"/>
</dbReference>
<dbReference type="InterPro" id="IPR029069">
    <property type="entry name" value="HotDog_dom_sf"/>
</dbReference>
<dbReference type="NCBIfam" id="TIGR01750">
    <property type="entry name" value="fabZ"/>
    <property type="match status" value="1"/>
</dbReference>
<dbReference type="NCBIfam" id="NF000582">
    <property type="entry name" value="PRK00006.1"/>
    <property type="match status" value="1"/>
</dbReference>
<dbReference type="PANTHER" id="PTHR30272">
    <property type="entry name" value="3-HYDROXYACYL-[ACYL-CARRIER-PROTEIN] DEHYDRATASE"/>
    <property type="match status" value="1"/>
</dbReference>
<dbReference type="PANTHER" id="PTHR30272:SF1">
    <property type="entry name" value="3-HYDROXYACYL-[ACYL-CARRIER-PROTEIN] DEHYDRATASE"/>
    <property type="match status" value="1"/>
</dbReference>
<dbReference type="Pfam" id="PF07977">
    <property type="entry name" value="FabA"/>
    <property type="match status" value="1"/>
</dbReference>
<dbReference type="SUPFAM" id="SSF54637">
    <property type="entry name" value="Thioesterase/thiol ester dehydrase-isomerase"/>
    <property type="match status" value="1"/>
</dbReference>
<reference key="1">
    <citation type="submission" date="2006-03" db="EMBL/GenBank/DDBJ databases">
        <title>Complete sequence of Shewanella denitrificans OS217.</title>
        <authorList>
            <consortium name="US DOE Joint Genome Institute"/>
            <person name="Copeland A."/>
            <person name="Lucas S."/>
            <person name="Lapidus A."/>
            <person name="Barry K."/>
            <person name="Detter J.C."/>
            <person name="Glavina del Rio T."/>
            <person name="Hammon N."/>
            <person name="Israni S."/>
            <person name="Dalin E."/>
            <person name="Tice H."/>
            <person name="Pitluck S."/>
            <person name="Brettin T."/>
            <person name="Bruce D."/>
            <person name="Han C."/>
            <person name="Tapia R."/>
            <person name="Gilna P."/>
            <person name="Kiss H."/>
            <person name="Schmutz J."/>
            <person name="Larimer F."/>
            <person name="Land M."/>
            <person name="Hauser L."/>
            <person name="Kyrpides N."/>
            <person name="Lykidis A."/>
            <person name="Richardson P."/>
        </authorList>
    </citation>
    <scope>NUCLEOTIDE SEQUENCE [LARGE SCALE GENOMIC DNA]</scope>
    <source>
        <strain>OS217 / ATCC BAA-1090 / DSM 15013</strain>
    </source>
</reference>
<keyword id="KW-0963">Cytoplasm</keyword>
<keyword id="KW-0441">Lipid A biosynthesis</keyword>
<keyword id="KW-0444">Lipid biosynthesis</keyword>
<keyword id="KW-0443">Lipid metabolism</keyword>
<keyword id="KW-0456">Lyase</keyword>
<keyword id="KW-1185">Reference proteome</keyword>
<accession>Q12NX6</accession>
<protein>
    <recommendedName>
        <fullName evidence="1">3-hydroxyacyl-[acyl-carrier-protein] dehydratase FabZ</fullName>
        <ecNumber evidence="1">4.2.1.59</ecNumber>
    </recommendedName>
    <alternativeName>
        <fullName evidence="1">(3R)-hydroxymyristoyl-[acyl-carrier-protein] dehydratase</fullName>
        <shortName evidence="1">(3R)-hydroxymyristoyl-ACP dehydrase</shortName>
    </alternativeName>
    <alternativeName>
        <fullName evidence="1">Beta-hydroxyacyl-ACP dehydratase</fullName>
    </alternativeName>
</protein>
<name>FABZ_SHEDO</name>
<organism>
    <name type="scientific">Shewanella denitrificans (strain OS217 / ATCC BAA-1090 / DSM 15013)</name>
    <dbReference type="NCBI Taxonomy" id="318161"/>
    <lineage>
        <taxon>Bacteria</taxon>
        <taxon>Pseudomonadati</taxon>
        <taxon>Pseudomonadota</taxon>
        <taxon>Gammaproteobacteria</taxon>
        <taxon>Alteromonadales</taxon>
        <taxon>Shewanellaceae</taxon>
        <taxon>Shewanella</taxon>
    </lineage>
</organism>
<evidence type="ECO:0000255" key="1">
    <source>
        <dbReference type="HAMAP-Rule" id="MF_00406"/>
    </source>
</evidence>
<feature type="chain" id="PRO_0000301924" description="3-hydroxyacyl-[acyl-carrier-protein] dehydratase FabZ">
    <location>
        <begin position="1"/>
        <end position="153"/>
    </location>
</feature>
<feature type="active site" evidence="1">
    <location>
        <position position="54"/>
    </location>
</feature>